<sequence length="269" mass="32605">MLGLQIFTLLSIPTLLYTYELELLDLTRTPPEKELEYWCTYANHCRFCWDCQDGICRNKVFENHSPILENDYIANCSVFRRNEFCTYYVTSIKPHEVYRTECPQQSHEWHEAVIRKWQKLLTYGFYLVGCVLVANYVRKRSLQTVMYLLVLLVIFFLLSQLMLYRELEDKKHKIGSIPPKRELEHWCTHGKYCDFCWDCQNGICRNKVFKNHPPIGENDFIRHDCWTIHLSNKCYYQKIYKYPDYHMMECSQPTPYKWYDNLMKKQDIM</sequence>
<proteinExistence type="inferred from homology"/>
<comment type="function">
    <text evidence="1">Plays a role in virus cell tropism, and may be required for efficient virus replication in macrophages.</text>
</comment>
<comment type="subcellular location">
    <subcellularLocation>
        <location evidence="4">Host membrane</location>
        <topology evidence="4">Multi-pass membrane protein</topology>
    </subcellularLocation>
</comment>
<comment type="induction">
    <text evidence="4">Expressed in the immediate early phase of the viral replicative cycle.</text>
</comment>
<comment type="similarity">
    <text evidence="4">Belongs to the asfivirus MGF 110 family.</text>
</comment>
<gene>
    <name type="ordered locus">War-006</name>
</gene>
<evidence type="ECO:0000250" key="1"/>
<evidence type="ECO:0000250" key="2">
    <source>
        <dbReference type="UniProtKB" id="A9JLI2"/>
    </source>
</evidence>
<evidence type="ECO:0000255" key="3"/>
<evidence type="ECO:0000305" key="4"/>
<accession>P0C9G1</accession>
<dbReference type="EMBL" id="AY261366">
    <property type="status" value="NOT_ANNOTATED_CDS"/>
    <property type="molecule type" value="Genomic_DNA"/>
</dbReference>
<dbReference type="Proteomes" id="UP000000858">
    <property type="component" value="Segment"/>
</dbReference>
<dbReference type="GO" id="GO:0033644">
    <property type="term" value="C:host cell membrane"/>
    <property type="evidence" value="ECO:0007669"/>
    <property type="project" value="UniProtKB-SubCell"/>
</dbReference>
<dbReference type="GO" id="GO:0016020">
    <property type="term" value="C:membrane"/>
    <property type="evidence" value="ECO:0007669"/>
    <property type="project" value="UniProtKB-KW"/>
</dbReference>
<dbReference type="InterPro" id="IPR004848">
    <property type="entry name" value="ASFV_fam_110"/>
</dbReference>
<dbReference type="Pfam" id="PF01639">
    <property type="entry name" value="v110"/>
    <property type="match status" value="2"/>
</dbReference>
<name>1101L_ASFWA</name>
<feature type="signal peptide" evidence="2">
    <location>
        <begin position="1"/>
        <end position="26"/>
    </location>
</feature>
<feature type="chain" id="PRO_0000373183" description="Protein MGF 110-1L">
    <location>
        <begin position="27"/>
        <end position="269"/>
    </location>
</feature>
<feature type="topological domain" description="Extracellular" evidence="3">
    <location>
        <begin position="27"/>
        <end position="116"/>
    </location>
</feature>
<feature type="transmembrane region" description="Helical" evidence="3">
    <location>
        <begin position="117"/>
        <end position="137"/>
    </location>
</feature>
<feature type="topological domain" description="Cytoplasmic" evidence="3">
    <location>
        <begin position="138"/>
        <end position="144"/>
    </location>
</feature>
<feature type="transmembrane region" description="Helical" evidence="3">
    <location>
        <begin position="145"/>
        <end position="165"/>
    </location>
</feature>
<feature type="topological domain" description="Extracellular" evidence="3">
    <location>
        <begin position="166"/>
        <end position="269"/>
    </location>
</feature>
<feature type="repeat" description="A">
    <location>
        <begin position="1"/>
        <end position="145"/>
    </location>
</feature>
<feature type="repeat" description="B">
    <location>
        <begin position="147"/>
        <end position="269"/>
    </location>
</feature>
<feature type="glycosylation site" description="N-linked (GlcNAc...) asparagine; by host" evidence="3">
    <location>
        <position position="75"/>
    </location>
</feature>
<reference key="1">
    <citation type="submission" date="2003-03" db="EMBL/GenBank/DDBJ databases">
        <title>African swine fever virus genomes.</title>
        <authorList>
            <person name="Kutish G.F."/>
            <person name="Rock D.L."/>
        </authorList>
    </citation>
    <scope>NUCLEOTIDE SEQUENCE [LARGE SCALE GENOMIC DNA]</scope>
</reference>
<organism>
    <name type="scientific">African swine fever virus (isolate Warthog/Namibia/Wart80/1980)</name>
    <name type="common">ASFV</name>
    <dbReference type="NCBI Taxonomy" id="561444"/>
    <lineage>
        <taxon>Viruses</taxon>
        <taxon>Varidnaviria</taxon>
        <taxon>Bamfordvirae</taxon>
        <taxon>Nucleocytoviricota</taxon>
        <taxon>Pokkesviricetes</taxon>
        <taxon>Asfuvirales</taxon>
        <taxon>Asfarviridae</taxon>
        <taxon>Asfivirus</taxon>
        <taxon>African swine fever virus</taxon>
    </lineage>
</organism>
<protein>
    <recommendedName>
        <fullName>Protein MGF 110-1L</fullName>
    </recommendedName>
</protein>
<organismHost>
    <name type="scientific">Ornithodoros</name>
    <name type="common">relapsing fever ticks</name>
    <dbReference type="NCBI Taxonomy" id="6937"/>
</organismHost>
<organismHost>
    <name type="scientific">Phacochoerus aethiopicus</name>
    <name type="common">Warthog</name>
    <dbReference type="NCBI Taxonomy" id="85517"/>
</organismHost>
<organismHost>
    <name type="scientific">Phacochoerus africanus</name>
    <name type="common">Warthog</name>
    <dbReference type="NCBI Taxonomy" id="41426"/>
</organismHost>
<organismHost>
    <name type="scientific">Potamochoerus larvatus</name>
    <name type="common">Bushpig</name>
    <dbReference type="NCBI Taxonomy" id="273792"/>
</organismHost>
<organismHost>
    <name type="scientific">Sus scrofa</name>
    <name type="common">Pig</name>
    <dbReference type="NCBI Taxonomy" id="9823"/>
</organismHost>
<keyword id="KW-0244">Early protein</keyword>
<keyword id="KW-0325">Glycoprotein</keyword>
<keyword id="KW-1043">Host membrane</keyword>
<keyword id="KW-0472">Membrane</keyword>
<keyword id="KW-0677">Repeat</keyword>
<keyword id="KW-0732">Signal</keyword>
<keyword id="KW-0812">Transmembrane</keyword>
<keyword id="KW-1133">Transmembrane helix</keyword>